<accession>P27074</accession>
<accession>Q00489</accession>
<organism>
    <name type="scientific">Candida maltosa</name>
    <name type="common">Yeast</name>
    <dbReference type="NCBI Taxonomy" id="5479"/>
    <lineage>
        <taxon>Eukaryota</taxon>
        <taxon>Fungi</taxon>
        <taxon>Dikarya</taxon>
        <taxon>Ascomycota</taxon>
        <taxon>Saccharomycotina</taxon>
        <taxon>Pichiomycetes</taxon>
        <taxon>Debaryomycetaceae</taxon>
        <taxon>Candida/Lodderomyces clade</taxon>
        <taxon>Candida</taxon>
    </lineage>
</organism>
<gene>
    <name type="primary">RIM-C</name>
    <name type="synonym">L41Q1A</name>
</gene>
<name>RL44Q_CANMA</name>
<reference key="1">
    <citation type="journal article" date="1992" name="J. Bacteriol.">
        <title>Drastic alteration of cycloheximide sensitivity by substitution of one amino acid in the L41 ribosomal protein of yeasts.</title>
        <authorList>
            <person name="Kawai S."/>
            <person name="Murao S."/>
            <person name="Mochizuki M."/>
            <person name="Shibuya I."/>
            <person name="Yano K."/>
            <person name="Takagi M."/>
        </authorList>
    </citation>
    <scope>NUCLEOTIDE SEQUENCE [GENOMIC DNA]</scope>
    <source>
        <strain>ATCC 28140 / CBS 5611 / IAM 12247 / JCM 1504 / NBRC 1977</strain>
    </source>
</reference>
<reference key="2">
    <citation type="submission" date="1994-12" db="EMBL/GenBank/DDBJ databases">
        <authorList>
            <person name="Eishun M."/>
        </authorList>
    </citation>
    <scope>NUCLEOTIDE SEQUENCE [GENOMIC DNA]</scope>
    <source>
        <strain>ATCC 28140 / CBS 5611 / IAM 12247 / JCM 1504 / NBRC 1977</strain>
    </source>
</reference>
<keyword id="KW-0046">Antibiotic resistance</keyword>
<keyword id="KW-0196">Cycloheximide resistance</keyword>
<keyword id="KW-0687">Ribonucleoprotein</keyword>
<keyword id="KW-0689">Ribosomal protein</keyword>
<evidence type="ECO:0000250" key="1"/>
<evidence type="ECO:0000305" key="2"/>
<protein>
    <recommendedName>
        <fullName>Large ribosomal subunit protein eL42Q</fullName>
    </recommendedName>
    <alternativeName>
        <fullName>60S ribosomal protein L44 Q</fullName>
    </alternativeName>
    <alternativeName>
        <fullName>L41</fullName>
    </alternativeName>
    <alternativeName>
        <fullName>L41 Q-type</fullName>
    </alternativeName>
</protein>
<sequence>MVNIPKTRNTYCKGKGCRKHTIHKVTQYKSGRASLFAQGKRRYDRKQSGYGGQTKQVFHKKAKTTKKIVLKLECTVCKTKKQLPLKRCKHIELGGEKKQKGQALQF</sequence>
<proteinExistence type="inferred from homology"/>
<dbReference type="EMBL" id="D10577">
    <property type="protein sequence ID" value="BAA01434.1"/>
    <property type="molecule type" value="Genomic_DNA"/>
</dbReference>
<dbReference type="EMBL" id="D43686">
    <property type="protein sequence ID" value="BAA07783.1"/>
    <property type="molecule type" value="Genomic_DNA"/>
</dbReference>
<dbReference type="PIR" id="A43301">
    <property type="entry name" value="A43301"/>
</dbReference>
<dbReference type="SMR" id="P27074"/>
<dbReference type="GO" id="GO:1990904">
    <property type="term" value="C:ribonucleoprotein complex"/>
    <property type="evidence" value="ECO:0007669"/>
    <property type="project" value="UniProtKB-KW"/>
</dbReference>
<dbReference type="GO" id="GO:0005840">
    <property type="term" value="C:ribosome"/>
    <property type="evidence" value="ECO:0007669"/>
    <property type="project" value="UniProtKB-KW"/>
</dbReference>
<dbReference type="GO" id="GO:0003735">
    <property type="term" value="F:structural constituent of ribosome"/>
    <property type="evidence" value="ECO:0007669"/>
    <property type="project" value="InterPro"/>
</dbReference>
<dbReference type="GO" id="GO:0046677">
    <property type="term" value="P:response to antibiotic"/>
    <property type="evidence" value="ECO:0007669"/>
    <property type="project" value="UniProtKB-KW"/>
</dbReference>
<dbReference type="GO" id="GO:0046898">
    <property type="term" value="P:response to cycloheximide"/>
    <property type="evidence" value="ECO:0007669"/>
    <property type="project" value="UniProtKB-KW"/>
</dbReference>
<dbReference type="GO" id="GO:0006412">
    <property type="term" value="P:translation"/>
    <property type="evidence" value="ECO:0007669"/>
    <property type="project" value="InterPro"/>
</dbReference>
<dbReference type="FunFam" id="3.10.450.80:FF:000001">
    <property type="entry name" value="60S ribosomal protein L44"/>
    <property type="match status" value="1"/>
</dbReference>
<dbReference type="Gene3D" id="3.10.450.80">
    <property type="match status" value="1"/>
</dbReference>
<dbReference type="InterPro" id="IPR000552">
    <property type="entry name" value="Ribosomal_eL44"/>
</dbReference>
<dbReference type="InterPro" id="IPR053708">
    <property type="entry name" value="Ribosomal_LSU_eL42"/>
</dbReference>
<dbReference type="InterPro" id="IPR011332">
    <property type="entry name" value="Ribosomal_zn-bd"/>
</dbReference>
<dbReference type="PANTHER" id="PTHR10369">
    <property type="entry name" value="60S RIBOSOMAL PROTEIN L36A/L44"/>
    <property type="match status" value="1"/>
</dbReference>
<dbReference type="Pfam" id="PF00935">
    <property type="entry name" value="Ribosomal_L44"/>
    <property type="match status" value="1"/>
</dbReference>
<dbReference type="SUPFAM" id="SSF57829">
    <property type="entry name" value="Zn-binding ribosomal proteins"/>
    <property type="match status" value="1"/>
</dbReference>
<dbReference type="PROSITE" id="PS01172">
    <property type="entry name" value="RIBOSOMAL_L44E"/>
    <property type="match status" value="1"/>
</dbReference>
<comment type="miscellaneous">
    <text>Confers resistance to cycloheximide, an inhibitor of polypeptide elongation.</text>
</comment>
<comment type="similarity">
    <text evidence="2">Belongs to the eukaryotic ribosomal protein eL42 family.</text>
</comment>
<feature type="initiator methionine" description="Removed" evidence="1">
    <location>
        <position position="1"/>
    </location>
</feature>
<feature type="chain" id="PRO_0000149134" description="Large ribosomal subunit protein eL42Q">
    <location>
        <begin position="2"/>
        <end position="106"/>
    </location>
</feature>
<feature type="sequence conflict" description="In Ref. 2; BAA07783." evidence="2" ref="2">
    <original>S</original>
    <variation>A</variation>
    <location>
        <position position="30"/>
    </location>
</feature>
<feature type="sequence conflict" description="In Ref. 2; BAA07783." evidence="2" ref="2">
    <original>K</original>
    <variation>R</variation>
    <location>
        <position position="97"/>
    </location>
</feature>